<keyword id="KW-0010">Activator</keyword>
<keyword id="KW-0963">Cytoplasm</keyword>
<keyword id="KW-0238">DNA-binding</keyword>
<keyword id="KW-0597">Phosphoprotein</keyword>
<keyword id="KW-0678">Repressor</keyword>
<keyword id="KW-0804">Transcription</keyword>
<keyword id="KW-0805">Transcription regulation</keyword>
<keyword id="KW-0902">Two-component regulatory system</keyword>
<name>SRRA_STAAU</name>
<protein>
    <recommendedName>
        <fullName>Transcriptional regulatory protein SrrA</fullName>
    </recommendedName>
    <alternativeName>
        <fullName>Staphylococcal respiratory response protein A</fullName>
    </alternativeName>
</protein>
<accession>Q9L524</accession>
<evidence type="ECO:0000250" key="1">
    <source>
        <dbReference type="UniProtKB" id="Q5HFT0"/>
    </source>
</evidence>
<evidence type="ECO:0000255" key="2">
    <source>
        <dbReference type="PROSITE-ProRule" id="PRU00169"/>
    </source>
</evidence>
<evidence type="ECO:0000255" key="3">
    <source>
        <dbReference type="PROSITE-ProRule" id="PRU01091"/>
    </source>
</evidence>
<evidence type="ECO:0000269" key="4">
    <source>
    </source>
</evidence>
<evidence type="ECO:0000269" key="5">
    <source>
    </source>
</evidence>
<evidence type="ECO:0000305" key="6"/>
<sequence>MSNEILIVDDEDRIRRLLKMYLERESFEIHEASNGQEAYELAMENNYACILLDLMLPEMDGIQVATKLREHKQTPIIMLTAKGEETNRVEGFESGADDYIVKPFSPREVVLRVKALLRRTQSTTVEQSEPHARDVIEFKHLEIDNDAHRVLADNQEVNLTPKEYELLIYLAKTPNKVFDREQLLKEVWHYEFYGDLRTVDTHVKRLREKLNRVSSEAAHMIQTVWGVGYKFEVKSNDEPAK</sequence>
<gene>
    <name type="primary">srrA</name>
</gene>
<feature type="chain" id="PRO_0000081247" description="Transcriptional regulatory protein SrrA">
    <location>
        <begin position="1"/>
        <end position="241"/>
    </location>
</feature>
<feature type="domain" description="Response regulatory" evidence="2">
    <location>
        <begin position="4"/>
        <end position="117"/>
    </location>
</feature>
<feature type="DNA-binding region" description="OmpR/PhoB-type" evidence="3">
    <location>
        <begin position="133"/>
        <end position="233"/>
    </location>
</feature>
<feature type="modified residue" description="4-aspartylphosphate" evidence="2">
    <location>
        <position position="53"/>
    </location>
</feature>
<dbReference type="EMBL" id="AF260326">
    <property type="protein sequence ID" value="AAF70312.2"/>
    <property type="molecule type" value="Genomic_DNA"/>
</dbReference>
<dbReference type="PIR" id="D89928">
    <property type="entry name" value="D89928"/>
</dbReference>
<dbReference type="RefSeq" id="WP_000064078.1">
    <property type="nucleotide sequence ID" value="NZ_WYDB01000002.1"/>
</dbReference>
<dbReference type="SMR" id="Q9L524"/>
<dbReference type="GeneID" id="98345856"/>
<dbReference type="OMA" id="DVWNYEF"/>
<dbReference type="PHI-base" id="PHI:5466"/>
<dbReference type="GO" id="GO:0005829">
    <property type="term" value="C:cytosol"/>
    <property type="evidence" value="ECO:0007669"/>
    <property type="project" value="TreeGrafter"/>
</dbReference>
<dbReference type="GO" id="GO:0032993">
    <property type="term" value="C:protein-DNA complex"/>
    <property type="evidence" value="ECO:0007669"/>
    <property type="project" value="TreeGrafter"/>
</dbReference>
<dbReference type="GO" id="GO:0000156">
    <property type="term" value="F:phosphorelay response regulator activity"/>
    <property type="evidence" value="ECO:0007669"/>
    <property type="project" value="TreeGrafter"/>
</dbReference>
<dbReference type="GO" id="GO:0000976">
    <property type="term" value="F:transcription cis-regulatory region binding"/>
    <property type="evidence" value="ECO:0007669"/>
    <property type="project" value="TreeGrafter"/>
</dbReference>
<dbReference type="GO" id="GO:0006355">
    <property type="term" value="P:regulation of DNA-templated transcription"/>
    <property type="evidence" value="ECO:0007669"/>
    <property type="project" value="InterPro"/>
</dbReference>
<dbReference type="CDD" id="cd17574">
    <property type="entry name" value="REC_OmpR"/>
    <property type="match status" value="1"/>
</dbReference>
<dbReference type="CDD" id="cd00383">
    <property type="entry name" value="trans_reg_C"/>
    <property type="match status" value="1"/>
</dbReference>
<dbReference type="FunFam" id="3.40.50.2300:FF:000001">
    <property type="entry name" value="DNA-binding response regulator PhoB"/>
    <property type="match status" value="1"/>
</dbReference>
<dbReference type="FunFam" id="1.10.10.10:FF:000018">
    <property type="entry name" value="DNA-binding response regulator ResD"/>
    <property type="match status" value="1"/>
</dbReference>
<dbReference type="Gene3D" id="3.40.50.2300">
    <property type="match status" value="1"/>
</dbReference>
<dbReference type="Gene3D" id="6.10.250.690">
    <property type="match status" value="1"/>
</dbReference>
<dbReference type="Gene3D" id="1.10.10.10">
    <property type="entry name" value="Winged helix-like DNA-binding domain superfamily/Winged helix DNA-binding domain"/>
    <property type="match status" value="1"/>
</dbReference>
<dbReference type="InterPro" id="IPR011006">
    <property type="entry name" value="CheY-like_superfamily"/>
</dbReference>
<dbReference type="InterPro" id="IPR001867">
    <property type="entry name" value="OmpR/PhoB-type_DNA-bd"/>
</dbReference>
<dbReference type="InterPro" id="IPR001789">
    <property type="entry name" value="Sig_transdc_resp-reg_receiver"/>
</dbReference>
<dbReference type="InterPro" id="IPR039420">
    <property type="entry name" value="WalR-like"/>
</dbReference>
<dbReference type="InterPro" id="IPR036388">
    <property type="entry name" value="WH-like_DNA-bd_sf"/>
</dbReference>
<dbReference type="PANTHER" id="PTHR48111">
    <property type="entry name" value="REGULATOR OF RPOS"/>
    <property type="match status" value="1"/>
</dbReference>
<dbReference type="PANTHER" id="PTHR48111:SF44">
    <property type="entry name" value="TRANSCRIPTIONAL REGULATORY PROTEIN RESD"/>
    <property type="match status" value="1"/>
</dbReference>
<dbReference type="Pfam" id="PF00072">
    <property type="entry name" value="Response_reg"/>
    <property type="match status" value="1"/>
</dbReference>
<dbReference type="Pfam" id="PF00486">
    <property type="entry name" value="Trans_reg_C"/>
    <property type="match status" value="1"/>
</dbReference>
<dbReference type="SMART" id="SM00448">
    <property type="entry name" value="REC"/>
    <property type="match status" value="1"/>
</dbReference>
<dbReference type="SMART" id="SM00862">
    <property type="entry name" value="Trans_reg_C"/>
    <property type="match status" value="1"/>
</dbReference>
<dbReference type="SUPFAM" id="SSF52172">
    <property type="entry name" value="CheY-like"/>
    <property type="match status" value="1"/>
</dbReference>
<dbReference type="PROSITE" id="PS51755">
    <property type="entry name" value="OMPR_PHOB"/>
    <property type="match status" value="1"/>
</dbReference>
<dbReference type="PROSITE" id="PS50110">
    <property type="entry name" value="RESPONSE_REGULATORY"/>
    <property type="match status" value="1"/>
</dbReference>
<reference key="1">
    <citation type="journal article" date="2001" name="J. Bacteriol.">
        <title>Identification of a novel two-component regulatory system that acts in global regulation of virulence factors of Staphylococcus aureus.</title>
        <authorList>
            <person name="Yarwood J.M."/>
            <person name="McCormick J.K."/>
            <person name="Schlievert P.M."/>
        </authorList>
    </citation>
    <scope>NUCLEOTIDE SEQUENCE [GENOMIC DNA]</scope>
    <scope>FUNCTION</scope>
    <scope>INDUCTION</scope>
    <source>
        <strain>MN8</strain>
    </source>
</reference>
<reference key="2">
    <citation type="journal article" date="2004" name="J. Bacteriol.">
        <title>Characterization of virulence factor regulation by SrrAB, a two-component system in Staphylococcus aureus.</title>
        <authorList>
            <person name="Pragman A.A."/>
            <person name="Yarwood J.M."/>
            <person name="Tripp T.J."/>
            <person name="Schlievert P.M."/>
        </authorList>
    </citation>
    <scope>FUNCTION</scope>
    <scope>SUBCELLULAR LOCATION</scope>
    <source>
        <strain>MN8</strain>
    </source>
</reference>
<proteinExistence type="evidence at transcript level"/>
<organism>
    <name type="scientific">Staphylococcus aureus</name>
    <dbReference type="NCBI Taxonomy" id="1280"/>
    <lineage>
        <taxon>Bacteria</taxon>
        <taxon>Bacillati</taxon>
        <taxon>Bacillota</taxon>
        <taxon>Bacilli</taxon>
        <taxon>Bacillales</taxon>
        <taxon>Staphylococcaceae</taxon>
        <taxon>Staphylococcus</taxon>
    </lineage>
</organism>
<comment type="function">
    <text evidence="1 4">Member of the two-component regulatory system SrrA/SrrB, which is involved in the global regulation of staphylococcal virulence factors in response to environmental oxygen levels as well as biofilm formation. Also plays an essential role in host-derived nitric oxide resistance by regulating hmp/flavohemoglobin, an enzyme that detoxifies nitric oxide by converting it to nitrate (By similarity). Functions as a transcription regulator by direct binding to promoter regions of target genes including agr, spa and tst promoters (PubMed:11157922).</text>
</comment>
<comment type="subcellular location">
    <subcellularLocation>
        <location evidence="5">Cytoplasm</location>
    </subcellularLocation>
</comment>
<comment type="induction">
    <text evidence="4">Autoregulated. Expression is maximal during the postexponential phase of growth, particularly under microaerobic conditions.</text>
</comment>
<comment type="PTM">
    <text evidence="6">Phosphorylated by SrrB.</text>
</comment>